<evidence type="ECO:0000255" key="1">
    <source>
        <dbReference type="HAMAP-Rule" id="MF_00537"/>
    </source>
</evidence>
<evidence type="ECO:0000305" key="2"/>
<protein>
    <recommendedName>
        <fullName evidence="1">Small ribosomal subunit protein uS14</fullName>
    </recommendedName>
    <alternativeName>
        <fullName evidence="2">30S ribosomal protein S14</fullName>
    </alternativeName>
</protein>
<proteinExistence type="inferred from homology"/>
<dbReference type="EMBL" id="CU928158">
    <property type="protein sequence ID" value="CAQ90770.1"/>
    <property type="molecule type" value="Genomic_DNA"/>
</dbReference>
<dbReference type="RefSeq" id="WP_001118930.1">
    <property type="nucleotide sequence ID" value="NC_011740.1"/>
</dbReference>
<dbReference type="SMR" id="B7LRS3"/>
<dbReference type="GeneID" id="93778680"/>
<dbReference type="KEGG" id="efe:EFER_3290"/>
<dbReference type="HOGENOM" id="CLU_139869_0_1_6"/>
<dbReference type="OrthoDB" id="9810484at2"/>
<dbReference type="Proteomes" id="UP000000745">
    <property type="component" value="Chromosome"/>
</dbReference>
<dbReference type="GO" id="GO:0005737">
    <property type="term" value="C:cytoplasm"/>
    <property type="evidence" value="ECO:0007669"/>
    <property type="project" value="UniProtKB-ARBA"/>
</dbReference>
<dbReference type="GO" id="GO:0015935">
    <property type="term" value="C:small ribosomal subunit"/>
    <property type="evidence" value="ECO:0007669"/>
    <property type="project" value="TreeGrafter"/>
</dbReference>
<dbReference type="GO" id="GO:0019843">
    <property type="term" value="F:rRNA binding"/>
    <property type="evidence" value="ECO:0007669"/>
    <property type="project" value="UniProtKB-UniRule"/>
</dbReference>
<dbReference type="GO" id="GO:0003735">
    <property type="term" value="F:structural constituent of ribosome"/>
    <property type="evidence" value="ECO:0007669"/>
    <property type="project" value="InterPro"/>
</dbReference>
<dbReference type="GO" id="GO:0006412">
    <property type="term" value="P:translation"/>
    <property type="evidence" value="ECO:0007669"/>
    <property type="project" value="UniProtKB-UniRule"/>
</dbReference>
<dbReference type="FunFam" id="1.10.287.1480:FF:000001">
    <property type="entry name" value="30S ribosomal protein S14"/>
    <property type="match status" value="1"/>
</dbReference>
<dbReference type="Gene3D" id="1.10.287.1480">
    <property type="match status" value="1"/>
</dbReference>
<dbReference type="HAMAP" id="MF_00537">
    <property type="entry name" value="Ribosomal_uS14_1"/>
    <property type="match status" value="1"/>
</dbReference>
<dbReference type="InterPro" id="IPR001209">
    <property type="entry name" value="Ribosomal_uS14"/>
</dbReference>
<dbReference type="InterPro" id="IPR023036">
    <property type="entry name" value="Ribosomal_uS14_bac/plastid"/>
</dbReference>
<dbReference type="InterPro" id="IPR018271">
    <property type="entry name" value="Ribosomal_uS14_CS"/>
</dbReference>
<dbReference type="NCBIfam" id="NF006477">
    <property type="entry name" value="PRK08881.1"/>
    <property type="match status" value="1"/>
</dbReference>
<dbReference type="PANTHER" id="PTHR19836">
    <property type="entry name" value="30S RIBOSOMAL PROTEIN S14"/>
    <property type="match status" value="1"/>
</dbReference>
<dbReference type="PANTHER" id="PTHR19836:SF19">
    <property type="entry name" value="SMALL RIBOSOMAL SUBUNIT PROTEIN US14M"/>
    <property type="match status" value="1"/>
</dbReference>
<dbReference type="Pfam" id="PF00253">
    <property type="entry name" value="Ribosomal_S14"/>
    <property type="match status" value="1"/>
</dbReference>
<dbReference type="SUPFAM" id="SSF57716">
    <property type="entry name" value="Glucocorticoid receptor-like (DNA-binding domain)"/>
    <property type="match status" value="1"/>
</dbReference>
<dbReference type="PROSITE" id="PS00527">
    <property type="entry name" value="RIBOSOMAL_S14"/>
    <property type="match status" value="1"/>
</dbReference>
<organism>
    <name type="scientific">Escherichia fergusonii (strain ATCC 35469 / DSM 13698 / CCUG 18766 / IAM 14443 / JCM 21226 / LMG 7866 / NBRC 102419 / NCTC 12128 / CDC 0568-73)</name>
    <dbReference type="NCBI Taxonomy" id="585054"/>
    <lineage>
        <taxon>Bacteria</taxon>
        <taxon>Pseudomonadati</taxon>
        <taxon>Pseudomonadota</taxon>
        <taxon>Gammaproteobacteria</taxon>
        <taxon>Enterobacterales</taxon>
        <taxon>Enterobacteriaceae</taxon>
        <taxon>Escherichia</taxon>
    </lineage>
</organism>
<gene>
    <name evidence="1" type="primary">rpsN</name>
    <name type="ordered locus">EFER_3290</name>
</gene>
<name>RS14_ESCF3</name>
<accession>B7LRS3</accession>
<feature type="chain" id="PRO_1000128402" description="Small ribosomal subunit protein uS14">
    <location>
        <begin position="1"/>
        <end position="101"/>
    </location>
</feature>
<sequence>MAKQSMKAREVKRVALADKYFAKRAELKAIISDVNASDEDRWNAVLKLQTLPRDSSPSRQRNRCRQTGRPHGFLRKFGLSRIKVREAAMRGEIPGLKKASW</sequence>
<reference key="1">
    <citation type="journal article" date="2009" name="PLoS Genet.">
        <title>Organised genome dynamics in the Escherichia coli species results in highly diverse adaptive paths.</title>
        <authorList>
            <person name="Touchon M."/>
            <person name="Hoede C."/>
            <person name="Tenaillon O."/>
            <person name="Barbe V."/>
            <person name="Baeriswyl S."/>
            <person name="Bidet P."/>
            <person name="Bingen E."/>
            <person name="Bonacorsi S."/>
            <person name="Bouchier C."/>
            <person name="Bouvet O."/>
            <person name="Calteau A."/>
            <person name="Chiapello H."/>
            <person name="Clermont O."/>
            <person name="Cruveiller S."/>
            <person name="Danchin A."/>
            <person name="Diard M."/>
            <person name="Dossat C."/>
            <person name="Karoui M.E."/>
            <person name="Frapy E."/>
            <person name="Garry L."/>
            <person name="Ghigo J.M."/>
            <person name="Gilles A.M."/>
            <person name="Johnson J."/>
            <person name="Le Bouguenec C."/>
            <person name="Lescat M."/>
            <person name="Mangenot S."/>
            <person name="Martinez-Jehanne V."/>
            <person name="Matic I."/>
            <person name="Nassif X."/>
            <person name="Oztas S."/>
            <person name="Petit M.A."/>
            <person name="Pichon C."/>
            <person name="Rouy Z."/>
            <person name="Ruf C.S."/>
            <person name="Schneider D."/>
            <person name="Tourret J."/>
            <person name="Vacherie B."/>
            <person name="Vallenet D."/>
            <person name="Medigue C."/>
            <person name="Rocha E.P.C."/>
            <person name="Denamur E."/>
        </authorList>
    </citation>
    <scope>NUCLEOTIDE SEQUENCE [LARGE SCALE GENOMIC DNA]</scope>
    <source>
        <strain>ATCC 35469 / DSM 13698 / BCRC 15582 / CCUG 18766 / IAM 14443 / JCM 21226 / LMG 7866 / NBRC 102419 / NCTC 12128 / CDC 0568-73</strain>
    </source>
</reference>
<comment type="function">
    <text evidence="1">Binds 16S rRNA, required for the assembly of 30S particles and may also be responsible for determining the conformation of the 16S rRNA at the A site.</text>
</comment>
<comment type="subunit">
    <text evidence="1">Part of the 30S ribosomal subunit. Contacts proteins S3 and S10.</text>
</comment>
<comment type="similarity">
    <text evidence="1">Belongs to the universal ribosomal protein uS14 family.</text>
</comment>
<keyword id="KW-0687">Ribonucleoprotein</keyword>
<keyword id="KW-0689">Ribosomal protein</keyword>
<keyword id="KW-0694">RNA-binding</keyword>
<keyword id="KW-0699">rRNA-binding</keyword>